<sequence>MHCDVLWHNAQLMTLDAAAGGLGIVDDGIVACRHGHIVYAGAAAQAPALQPDTAHDCQRRWISPGLIDCHTHLVYAGNRANEFEQRLRGASYADIAAAGGGIVATVRATRAADDAALLAASLPRLDAMLAEGVTTLEIKSGYGLALDDEIKQLRVARQLGAQRKVEVVPTFLGAHAVPPGEQAQPYIDQVCTQMIPAIAAQGLAEAVDVFCEHLAFSQAQAEQVFIAAQAHGLRIKIHAEQLSNQHGAELAARYGALSADHIEYLDQHGVAAMAAAGTVAVLLPGAFYFTRDTQLPPIAALRTAGVPLALATDCNPGTSPLTSPLLAMNMAATLFRMTVDECIAGFTREAARALGRSERLGQLRAGMDCDLAIWNIDAPADLVYRMGFNPLHARVWRGHPC</sequence>
<evidence type="ECO:0000255" key="1">
    <source>
        <dbReference type="HAMAP-Rule" id="MF_00372"/>
    </source>
</evidence>
<evidence type="ECO:0000305" key="2"/>
<feature type="chain" id="PRO_0000160975" description="Imidazolonepropionase">
    <location>
        <begin position="1"/>
        <end position="401"/>
    </location>
</feature>
<feature type="binding site" evidence="1">
    <location>
        <position position="70"/>
    </location>
    <ligand>
        <name>Fe(3+)</name>
        <dbReference type="ChEBI" id="CHEBI:29034"/>
    </ligand>
</feature>
<feature type="binding site" evidence="1">
    <location>
        <position position="70"/>
    </location>
    <ligand>
        <name>Zn(2+)</name>
        <dbReference type="ChEBI" id="CHEBI:29105"/>
    </ligand>
</feature>
<feature type="binding site" evidence="1">
    <location>
        <position position="72"/>
    </location>
    <ligand>
        <name>Fe(3+)</name>
        <dbReference type="ChEBI" id="CHEBI:29034"/>
    </ligand>
</feature>
<feature type="binding site" evidence="1">
    <location>
        <position position="72"/>
    </location>
    <ligand>
        <name>Zn(2+)</name>
        <dbReference type="ChEBI" id="CHEBI:29105"/>
    </ligand>
</feature>
<feature type="binding site" evidence="1">
    <location>
        <position position="79"/>
    </location>
    <ligand>
        <name>4-imidazolone-5-propanoate</name>
        <dbReference type="ChEBI" id="CHEBI:77893"/>
    </ligand>
</feature>
<feature type="binding site" evidence="1">
    <location>
        <position position="142"/>
    </location>
    <ligand>
        <name>4-imidazolone-5-propanoate</name>
        <dbReference type="ChEBI" id="CHEBI:77893"/>
    </ligand>
</feature>
<feature type="binding site" evidence="1">
    <location>
        <position position="142"/>
    </location>
    <ligand>
        <name>N-formimidoyl-L-glutamate</name>
        <dbReference type="ChEBI" id="CHEBI:58928"/>
    </ligand>
</feature>
<feature type="binding site" evidence="1">
    <location>
        <position position="175"/>
    </location>
    <ligand>
        <name>4-imidazolone-5-propanoate</name>
        <dbReference type="ChEBI" id="CHEBI:77893"/>
    </ligand>
</feature>
<feature type="binding site" evidence="1">
    <location>
        <position position="238"/>
    </location>
    <ligand>
        <name>Fe(3+)</name>
        <dbReference type="ChEBI" id="CHEBI:29034"/>
    </ligand>
</feature>
<feature type="binding site" evidence="1">
    <location>
        <position position="238"/>
    </location>
    <ligand>
        <name>Zn(2+)</name>
        <dbReference type="ChEBI" id="CHEBI:29105"/>
    </ligand>
</feature>
<feature type="binding site" evidence="1">
    <location>
        <position position="241"/>
    </location>
    <ligand>
        <name>4-imidazolone-5-propanoate</name>
        <dbReference type="ChEBI" id="CHEBI:77893"/>
    </ligand>
</feature>
<feature type="binding site" evidence="1">
    <location>
        <position position="313"/>
    </location>
    <ligand>
        <name>Fe(3+)</name>
        <dbReference type="ChEBI" id="CHEBI:29034"/>
    </ligand>
</feature>
<feature type="binding site" evidence="1">
    <location>
        <position position="313"/>
    </location>
    <ligand>
        <name>Zn(2+)</name>
        <dbReference type="ChEBI" id="CHEBI:29105"/>
    </ligand>
</feature>
<feature type="binding site" evidence="1">
    <location>
        <position position="315"/>
    </location>
    <ligand>
        <name>N-formimidoyl-L-glutamate</name>
        <dbReference type="ChEBI" id="CHEBI:58928"/>
    </ligand>
</feature>
<feature type="binding site" evidence="1">
    <location>
        <position position="317"/>
    </location>
    <ligand>
        <name>N-formimidoyl-L-glutamate</name>
        <dbReference type="ChEBI" id="CHEBI:58928"/>
    </ligand>
</feature>
<feature type="binding site" evidence="1">
    <location>
        <position position="318"/>
    </location>
    <ligand>
        <name>4-imidazolone-5-propanoate</name>
        <dbReference type="ChEBI" id="CHEBI:77893"/>
    </ligand>
</feature>
<keyword id="KW-0963">Cytoplasm</keyword>
<keyword id="KW-0369">Histidine metabolism</keyword>
<keyword id="KW-0378">Hydrolase</keyword>
<keyword id="KW-0408">Iron</keyword>
<keyword id="KW-0479">Metal-binding</keyword>
<keyword id="KW-0862">Zinc</keyword>
<reference key="1">
    <citation type="journal article" date="2002" name="Nature">
        <title>Comparison of the genomes of two Xanthomonas pathogens with differing host specificities.</title>
        <authorList>
            <person name="da Silva A.C.R."/>
            <person name="Ferro J.A."/>
            <person name="Reinach F.C."/>
            <person name="Farah C.S."/>
            <person name="Furlan L.R."/>
            <person name="Quaggio R.B."/>
            <person name="Monteiro-Vitorello C.B."/>
            <person name="Van Sluys M.A."/>
            <person name="Almeida N.F. Jr."/>
            <person name="Alves L.M.C."/>
            <person name="do Amaral A.M."/>
            <person name="Bertolini M.C."/>
            <person name="Camargo L.E.A."/>
            <person name="Camarotte G."/>
            <person name="Cannavan F."/>
            <person name="Cardozo J."/>
            <person name="Chambergo F."/>
            <person name="Ciapina L.P."/>
            <person name="Cicarelli R.M.B."/>
            <person name="Coutinho L.L."/>
            <person name="Cursino-Santos J.R."/>
            <person name="El-Dorry H."/>
            <person name="Faria J.B."/>
            <person name="Ferreira A.J.S."/>
            <person name="Ferreira R.C.C."/>
            <person name="Ferro M.I.T."/>
            <person name="Formighieri E.F."/>
            <person name="Franco M.C."/>
            <person name="Greggio C.C."/>
            <person name="Gruber A."/>
            <person name="Katsuyama A.M."/>
            <person name="Kishi L.T."/>
            <person name="Leite R.P."/>
            <person name="Lemos E.G.M."/>
            <person name="Lemos M.V.F."/>
            <person name="Locali E.C."/>
            <person name="Machado M.A."/>
            <person name="Madeira A.M.B.N."/>
            <person name="Martinez-Rossi N.M."/>
            <person name="Martins E.C."/>
            <person name="Meidanis J."/>
            <person name="Menck C.F.M."/>
            <person name="Miyaki C.Y."/>
            <person name="Moon D.H."/>
            <person name="Moreira L.M."/>
            <person name="Novo M.T.M."/>
            <person name="Okura V.K."/>
            <person name="Oliveira M.C."/>
            <person name="Oliveira V.R."/>
            <person name="Pereira H.A."/>
            <person name="Rossi A."/>
            <person name="Sena J.A.D."/>
            <person name="Silva C."/>
            <person name="de Souza R.F."/>
            <person name="Spinola L.A.F."/>
            <person name="Takita M.A."/>
            <person name="Tamura R.E."/>
            <person name="Teixeira E.C."/>
            <person name="Tezza R.I.D."/>
            <person name="Trindade dos Santos M."/>
            <person name="Truffi D."/>
            <person name="Tsai S.M."/>
            <person name="White F.F."/>
            <person name="Setubal J.C."/>
            <person name="Kitajima J.P."/>
        </authorList>
    </citation>
    <scope>NUCLEOTIDE SEQUENCE [LARGE SCALE GENOMIC DNA]</scope>
    <source>
        <strain>306</strain>
    </source>
</reference>
<protein>
    <recommendedName>
        <fullName evidence="1">Imidazolonepropionase</fullName>
        <ecNumber evidence="1">3.5.2.7</ecNumber>
    </recommendedName>
    <alternativeName>
        <fullName evidence="1">Imidazolone-5-propionate hydrolase</fullName>
    </alternativeName>
</protein>
<comment type="function">
    <text evidence="1">Catalyzes the hydrolytic cleavage of the carbon-nitrogen bond in imidazolone-5-propanoate to yield N-formimidoyl-L-glutamate. It is the third step in the universal histidine degradation pathway.</text>
</comment>
<comment type="catalytic activity">
    <reaction evidence="1">
        <text>4-imidazolone-5-propanoate + H2O = N-formimidoyl-L-glutamate</text>
        <dbReference type="Rhea" id="RHEA:23660"/>
        <dbReference type="ChEBI" id="CHEBI:15377"/>
        <dbReference type="ChEBI" id="CHEBI:58928"/>
        <dbReference type="ChEBI" id="CHEBI:77893"/>
        <dbReference type="EC" id="3.5.2.7"/>
    </reaction>
</comment>
<comment type="cofactor">
    <cofactor evidence="1">
        <name>Zn(2+)</name>
        <dbReference type="ChEBI" id="CHEBI:29105"/>
    </cofactor>
    <cofactor evidence="1">
        <name>Fe(3+)</name>
        <dbReference type="ChEBI" id="CHEBI:29034"/>
    </cofactor>
    <text evidence="1">Binds 1 zinc or iron ion per subunit.</text>
</comment>
<comment type="pathway">
    <text evidence="1">Amino-acid degradation; L-histidine degradation into L-glutamate; N-formimidoyl-L-glutamate from L-histidine: step 3/3.</text>
</comment>
<comment type="subcellular location">
    <subcellularLocation>
        <location evidence="1">Cytoplasm</location>
    </subcellularLocation>
</comment>
<comment type="similarity">
    <text evidence="1">Belongs to the metallo-dependent hydrolases superfamily. HutI family.</text>
</comment>
<comment type="sequence caution" evidence="2">
    <conflict type="erroneous initiation">
        <sequence resource="EMBL-CDS" id="AAM36506"/>
    </conflict>
</comment>
<name>HUTI_XANAC</name>
<proteinExistence type="inferred from homology"/>
<dbReference type="EC" id="3.5.2.7" evidence="1"/>
<dbReference type="EMBL" id="AE008923">
    <property type="protein sequence ID" value="AAM36506.1"/>
    <property type="status" value="ALT_INIT"/>
    <property type="molecule type" value="Genomic_DNA"/>
</dbReference>
<dbReference type="RefSeq" id="WP_011051050.1">
    <property type="nucleotide sequence ID" value="NC_003919.1"/>
</dbReference>
<dbReference type="SMR" id="Q8PLZ7"/>
<dbReference type="GeneID" id="66910796"/>
<dbReference type="KEGG" id="xac:XAC1638"/>
<dbReference type="eggNOG" id="COG1228">
    <property type="taxonomic scope" value="Bacteria"/>
</dbReference>
<dbReference type="HOGENOM" id="CLU_041647_0_0_6"/>
<dbReference type="UniPathway" id="UPA00379">
    <property type="reaction ID" value="UER00551"/>
</dbReference>
<dbReference type="Proteomes" id="UP000000576">
    <property type="component" value="Chromosome"/>
</dbReference>
<dbReference type="GO" id="GO:0005737">
    <property type="term" value="C:cytoplasm"/>
    <property type="evidence" value="ECO:0007669"/>
    <property type="project" value="UniProtKB-SubCell"/>
</dbReference>
<dbReference type="GO" id="GO:0050480">
    <property type="term" value="F:imidazolonepropionase activity"/>
    <property type="evidence" value="ECO:0007669"/>
    <property type="project" value="UniProtKB-UniRule"/>
</dbReference>
<dbReference type="GO" id="GO:0005506">
    <property type="term" value="F:iron ion binding"/>
    <property type="evidence" value="ECO:0007669"/>
    <property type="project" value="UniProtKB-UniRule"/>
</dbReference>
<dbReference type="GO" id="GO:0008270">
    <property type="term" value="F:zinc ion binding"/>
    <property type="evidence" value="ECO:0007669"/>
    <property type="project" value="UniProtKB-UniRule"/>
</dbReference>
<dbReference type="GO" id="GO:0019556">
    <property type="term" value="P:L-histidine catabolic process to glutamate and formamide"/>
    <property type="evidence" value="ECO:0007669"/>
    <property type="project" value="UniProtKB-UniPathway"/>
</dbReference>
<dbReference type="GO" id="GO:0019557">
    <property type="term" value="P:L-histidine catabolic process to glutamate and formate"/>
    <property type="evidence" value="ECO:0007669"/>
    <property type="project" value="UniProtKB-UniPathway"/>
</dbReference>
<dbReference type="FunFam" id="3.20.20.140:FF:000007">
    <property type="entry name" value="Imidazolonepropionase"/>
    <property type="match status" value="1"/>
</dbReference>
<dbReference type="Gene3D" id="3.20.20.140">
    <property type="entry name" value="Metal-dependent hydrolases"/>
    <property type="match status" value="1"/>
</dbReference>
<dbReference type="Gene3D" id="2.30.40.10">
    <property type="entry name" value="Urease, subunit C, domain 1"/>
    <property type="match status" value="1"/>
</dbReference>
<dbReference type="HAMAP" id="MF_00372">
    <property type="entry name" value="HutI"/>
    <property type="match status" value="1"/>
</dbReference>
<dbReference type="InterPro" id="IPR013108">
    <property type="entry name" value="Amidohydro_3"/>
</dbReference>
<dbReference type="InterPro" id="IPR005920">
    <property type="entry name" value="HutI"/>
</dbReference>
<dbReference type="InterPro" id="IPR011059">
    <property type="entry name" value="Metal-dep_hydrolase_composite"/>
</dbReference>
<dbReference type="InterPro" id="IPR032466">
    <property type="entry name" value="Metal_Hydrolase"/>
</dbReference>
<dbReference type="NCBIfam" id="TIGR01224">
    <property type="entry name" value="hutI"/>
    <property type="match status" value="1"/>
</dbReference>
<dbReference type="PANTHER" id="PTHR42752">
    <property type="entry name" value="IMIDAZOLONEPROPIONASE"/>
    <property type="match status" value="1"/>
</dbReference>
<dbReference type="PANTHER" id="PTHR42752:SF1">
    <property type="entry name" value="IMIDAZOLONEPROPIONASE-RELATED"/>
    <property type="match status" value="1"/>
</dbReference>
<dbReference type="Pfam" id="PF07969">
    <property type="entry name" value="Amidohydro_3"/>
    <property type="match status" value="1"/>
</dbReference>
<dbReference type="SUPFAM" id="SSF51338">
    <property type="entry name" value="Composite domain of metallo-dependent hydrolases"/>
    <property type="match status" value="1"/>
</dbReference>
<dbReference type="SUPFAM" id="SSF51556">
    <property type="entry name" value="Metallo-dependent hydrolases"/>
    <property type="match status" value="1"/>
</dbReference>
<gene>
    <name evidence="1" type="primary">hutI</name>
    <name type="ordered locus">XAC1638</name>
</gene>
<accession>Q8PLZ7</accession>
<organism>
    <name type="scientific">Xanthomonas axonopodis pv. citri (strain 306)</name>
    <dbReference type="NCBI Taxonomy" id="190486"/>
    <lineage>
        <taxon>Bacteria</taxon>
        <taxon>Pseudomonadati</taxon>
        <taxon>Pseudomonadota</taxon>
        <taxon>Gammaproteobacteria</taxon>
        <taxon>Lysobacterales</taxon>
        <taxon>Lysobacteraceae</taxon>
        <taxon>Xanthomonas</taxon>
    </lineage>
</organism>